<keyword id="KW-0002">3D-structure</keyword>
<keyword id="KW-0025">Alternative splicing</keyword>
<keyword id="KW-0156">Chromatin regulator</keyword>
<keyword id="KW-0160">Chromosomal rearrangement</keyword>
<keyword id="KW-0963">Cytoplasm</keyword>
<keyword id="KW-0206">Cytoskeleton</keyword>
<keyword id="KW-0227">DNA damage</keyword>
<keyword id="KW-0479">Metal-binding</keyword>
<keyword id="KW-0539">Nucleus</keyword>
<keyword id="KW-0597">Phosphoprotein</keyword>
<keyword id="KW-1267">Proteomics identification</keyword>
<keyword id="KW-1185">Reference proteome</keyword>
<keyword id="KW-0677">Repeat</keyword>
<keyword id="KW-0678">Repressor</keyword>
<keyword id="KW-0804">Transcription</keyword>
<keyword id="KW-0805">Transcription regulation</keyword>
<keyword id="KW-0862">Zinc</keyword>
<keyword id="KW-0863">Zinc-finger</keyword>
<reference key="1">
    <citation type="journal article" date="1998" name="Genomics">
        <title>The identification and localization of a human gene with sequence similarity to Polycomblike of Drosophila melanogaster.</title>
        <authorList>
            <person name="Coulson M."/>
            <person name="Robert S."/>
            <person name="Eyre H.J."/>
            <person name="Saint R."/>
        </authorList>
    </citation>
    <scope>NUCLEOTIDE SEQUENCE [MRNA] (ISOFORM 1)</scope>
    <scope>VARIANT LYS-304</scope>
    <source>
        <tissue>Placenta</tissue>
    </source>
</reference>
<reference key="2">
    <citation type="submission" date="1998-03" db="EMBL/GenBank/DDBJ databases">
        <authorList>
            <person name="Wang J.H."/>
            <person name="Du G.W."/>
            <person name="Zhou Y."/>
            <person name="Yuan J.G."/>
            <person name="Qiang B.Q."/>
        </authorList>
    </citation>
    <scope>NUCLEOTIDE SEQUENCE [MRNA] (ISOFORM 2)</scope>
    <scope>VARIANT LYS-304</scope>
</reference>
<reference key="3">
    <citation type="journal article" date="2003" name="Nature">
        <title>The DNA sequence and analysis of human chromosome 6.</title>
        <authorList>
            <person name="Mungall A.J."/>
            <person name="Palmer S.A."/>
            <person name="Sims S.K."/>
            <person name="Edwards C.A."/>
            <person name="Ashurst J.L."/>
            <person name="Wilming L."/>
            <person name="Jones M.C."/>
            <person name="Horton R."/>
            <person name="Hunt S.E."/>
            <person name="Scott C.E."/>
            <person name="Gilbert J.G.R."/>
            <person name="Clamp M.E."/>
            <person name="Bethel G."/>
            <person name="Milne S."/>
            <person name="Ainscough R."/>
            <person name="Almeida J.P."/>
            <person name="Ambrose K.D."/>
            <person name="Andrews T.D."/>
            <person name="Ashwell R.I.S."/>
            <person name="Babbage A.K."/>
            <person name="Bagguley C.L."/>
            <person name="Bailey J."/>
            <person name="Banerjee R."/>
            <person name="Barker D.J."/>
            <person name="Barlow K.F."/>
            <person name="Bates K."/>
            <person name="Beare D.M."/>
            <person name="Beasley H."/>
            <person name="Beasley O."/>
            <person name="Bird C.P."/>
            <person name="Blakey S.E."/>
            <person name="Bray-Allen S."/>
            <person name="Brook J."/>
            <person name="Brown A.J."/>
            <person name="Brown J.Y."/>
            <person name="Burford D.C."/>
            <person name="Burrill W."/>
            <person name="Burton J."/>
            <person name="Carder C."/>
            <person name="Carter N.P."/>
            <person name="Chapman J.C."/>
            <person name="Clark S.Y."/>
            <person name="Clark G."/>
            <person name="Clee C.M."/>
            <person name="Clegg S."/>
            <person name="Cobley V."/>
            <person name="Collier R.E."/>
            <person name="Collins J.E."/>
            <person name="Colman L.K."/>
            <person name="Corby N.R."/>
            <person name="Coville G.J."/>
            <person name="Culley K.M."/>
            <person name="Dhami P."/>
            <person name="Davies J."/>
            <person name="Dunn M."/>
            <person name="Earthrowl M.E."/>
            <person name="Ellington A.E."/>
            <person name="Evans K.A."/>
            <person name="Faulkner L."/>
            <person name="Francis M.D."/>
            <person name="Frankish A."/>
            <person name="Frankland J."/>
            <person name="French L."/>
            <person name="Garner P."/>
            <person name="Garnett J."/>
            <person name="Ghori M.J."/>
            <person name="Gilby L.M."/>
            <person name="Gillson C.J."/>
            <person name="Glithero R.J."/>
            <person name="Grafham D.V."/>
            <person name="Grant M."/>
            <person name="Gribble S."/>
            <person name="Griffiths C."/>
            <person name="Griffiths M.N.D."/>
            <person name="Hall R."/>
            <person name="Halls K.S."/>
            <person name="Hammond S."/>
            <person name="Harley J.L."/>
            <person name="Hart E.A."/>
            <person name="Heath P.D."/>
            <person name="Heathcott R."/>
            <person name="Holmes S.J."/>
            <person name="Howden P.J."/>
            <person name="Howe K.L."/>
            <person name="Howell G.R."/>
            <person name="Huckle E."/>
            <person name="Humphray S.J."/>
            <person name="Humphries M.D."/>
            <person name="Hunt A.R."/>
            <person name="Johnson C.M."/>
            <person name="Joy A.A."/>
            <person name="Kay M."/>
            <person name="Keenan S.J."/>
            <person name="Kimberley A.M."/>
            <person name="King A."/>
            <person name="Laird G.K."/>
            <person name="Langford C."/>
            <person name="Lawlor S."/>
            <person name="Leongamornlert D.A."/>
            <person name="Leversha M."/>
            <person name="Lloyd C.R."/>
            <person name="Lloyd D.M."/>
            <person name="Loveland J.E."/>
            <person name="Lovell J."/>
            <person name="Martin S."/>
            <person name="Mashreghi-Mohammadi M."/>
            <person name="Maslen G.L."/>
            <person name="Matthews L."/>
            <person name="McCann O.T."/>
            <person name="McLaren S.J."/>
            <person name="McLay K."/>
            <person name="McMurray A."/>
            <person name="Moore M.J.F."/>
            <person name="Mullikin J.C."/>
            <person name="Niblett D."/>
            <person name="Nickerson T."/>
            <person name="Novik K.L."/>
            <person name="Oliver K."/>
            <person name="Overton-Larty E.K."/>
            <person name="Parker A."/>
            <person name="Patel R."/>
            <person name="Pearce A.V."/>
            <person name="Peck A.I."/>
            <person name="Phillimore B.J.C.T."/>
            <person name="Phillips S."/>
            <person name="Plumb R.W."/>
            <person name="Porter K.M."/>
            <person name="Ramsey Y."/>
            <person name="Ranby S.A."/>
            <person name="Rice C.M."/>
            <person name="Ross M.T."/>
            <person name="Searle S.M."/>
            <person name="Sehra H.K."/>
            <person name="Sheridan E."/>
            <person name="Skuce C.D."/>
            <person name="Smith S."/>
            <person name="Smith M."/>
            <person name="Spraggon L."/>
            <person name="Squares S.L."/>
            <person name="Steward C.A."/>
            <person name="Sycamore N."/>
            <person name="Tamlyn-Hall G."/>
            <person name="Tester J."/>
            <person name="Theaker A.J."/>
            <person name="Thomas D.W."/>
            <person name="Thorpe A."/>
            <person name="Tracey A."/>
            <person name="Tromans A."/>
            <person name="Tubby B."/>
            <person name="Wall M."/>
            <person name="Wallis J.M."/>
            <person name="West A.P."/>
            <person name="White S.S."/>
            <person name="Whitehead S.L."/>
            <person name="Whittaker H."/>
            <person name="Wild A."/>
            <person name="Willey D.J."/>
            <person name="Wilmer T.E."/>
            <person name="Wood J.M."/>
            <person name="Wray P.W."/>
            <person name="Wyatt J.C."/>
            <person name="Young L."/>
            <person name="Younger R.M."/>
            <person name="Bentley D.R."/>
            <person name="Coulson A."/>
            <person name="Durbin R.M."/>
            <person name="Hubbard T."/>
            <person name="Sulston J.E."/>
            <person name="Dunham I."/>
            <person name="Rogers J."/>
            <person name="Beck S."/>
        </authorList>
    </citation>
    <scope>NUCLEOTIDE SEQUENCE [LARGE SCALE GENOMIC DNA]</scope>
    <scope>VARIANT LYS-304</scope>
</reference>
<reference key="4">
    <citation type="submission" date="2005-07" db="EMBL/GenBank/DDBJ databases">
        <authorList>
            <person name="Mural R.J."/>
            <person name="Istrail S."/>
            <person name="Sutton G.G."/>
            <person name="Florea L."/>
            <person name="Halpern A.L."/>
            <person name="Mobarry C.M."/>
            <person name="Lippert R."/>
            <person name="Walenz B."/>
            <person name="Shatkay H."/>
            <person name="Dew I."/>
            <person name="Miller J.R."/>
            <person name="Flanigan M.J."/>
            <person name="Edwards N.J."/>
            <person name="Bolanos R."/>
            <person name="Fasulo D."/>
            <person name="Halldorsson B.V."/>
            <person name="Hannenhalli S."/>
            <person name="Turner R."/>
            <person name="Yooseph S."/>
            <person name="Lu F."/>
            <person name="Nusskern D.R."/>
            <person name="Shue B.C."/>
            <person name="Zheng X.H."/>
            <person name="Zhong F."/>
            <person name="Delcher A.L."/>
            <person name="Huson D.H."/>
            <person name="Kravitz S.A."/>
            <person name="Mouchard L."/>
            <person name="Reinert K."/>
            <person name="Remington K.A."/>
            <person name="Clark A.G."/>
            <person name="Waterman M.S."/>
            <person name="Eichler E.E."/>
            <person name="Adams M.D."/>
            <person name="Hunkapiller M.W."/>
            <person name="Myers E.W."/>
            <person name="Venter J.C."/>
        </authorList>
    </citation>
    <scope>NUCLEOTIDE SEQUENCE [LARGE SCALE GENOMIC DNA]</scope>
    <scope>VARIANT LYS-304</scope>
</reference>
<reference key="5">
    <citation type="journal article" date="2004" name="Genome Res.">
        <title>The status, quality, and expansion of the NIH full-length cDNA project: the Mammalian Gene Collection (MGC).</title>
        <authorList>
            <consortium name="The MGC Project Team"/>
        </authorList>
    </citation>
    <scope>NUCLEOTIDE SEQUENCE [LARGE SCALE MRNA] (ISOFORM 2)</scope>
    <scope>VARIANT LYS-304</scope>
    <source>
        <tissue>Uterus</tissue>
    </source>
</reference>
<reference key="6">
    <citation type="journal article" date="2006" name="Cancer Res.">
        <title>Consistent rearrangement of chromosomal band 6p21 with generation of fusion genes JAZF1/PHF1 and EPC1/PHF1 in endometrial stromal sarcoma.</title>
        <authorList>
            <person name="Micci F."/>
            <person name="Panagopoulos I."/>
            <person name="Bjerkehagen B."/>
            <person name="Heim S."/>
        </authorList>
    </citation>
    <scope>DISEASE</scope>
    <scope>CHROMOSOMAL TRANSLOCATION WITH JAZF1</scope>
</reference>
<reference key="7">
    <citation type="journal article" date="2008" name="Mol. Cell. Biol.">
        <title>Role of hPHF1 in H3K27 methylation and Hox gene silencing.</title>
        <authorList>
            <person name="Cao R."/>
            <person name="Wang H."/>
            <person name="He J."/>
            <person name="Erdjument-Bromage H."/>
            <person name="Tempst P."/>
            <person name="Zhang Y."/>
        </authorList>
    </citation>
    <scope>FUNCTION</scope>
    <scope>IDENTIFICATION BY MASS SPECTROMETRY</scope>
    <scope>INTERACTION WITH THE PRC2 COMPLEX</scope>
</reference>
<reference key="8">
    <citation type="journal article" date="2008" name="Mol. Cell. Biol.">
        <title>Ezh2 requires PHF1 to efficiently catalyze H3 lysine 27 trimethylation in vivo.</title>
        <authorList>
            <person name="Sarma K."/>
            <person name="Margueron R."/>
            <person name="Ivanov A."/>
            <person name="Pirrotta V."/>
            <person name="Reinberg D."/>
        </authorList>
    </citation>
    <scope>FUNCTION</scope>
    <scope>INTERACTION WITH THE PRC2 COMPLEX</scope>
    <scope>SUBCELLULAR LOCATION</scope>
</reference>
<reference key="9">
    <citation type="journal article" date="2008" name="Nucleic Acids Res.">
        <title>A polycomb group protein, PHF1, is involved in the response to DNA double-strand breaks in human cell.</title>
        <authorList>
            <person name="Hong Z."/>
            <person name="Jiang J."/>
            <person name="Lan L."/>
            <person name="Nakajima S."/>
            <person name="Kanno S."/>
            <person name="Koseki H."/>
            <person name="Yasui A."/>
        </authorList>
    </citation>
    <scope>FUNCTION</scope>
    <scope>SUBCELLULAR LOCATION</scope>
</reference>
<reference key="10">
    <citation type="journal article" date="2008" name="Proc. Natl. Acad. Sci. U.S.A.">
        <title>A quantitative atlas of mitotic phosphorylation.</title>
        <authorList>
            <person name="Dephoure N."/>
            <person name="Zhou C."/>
            <person name="Villen J."/>
            <person name="Beausoleil S.A."/>
            <person name="Bakalarski C.E."/>
            <person name="Elledge S.J."/>
            <person name="Gygi S.P."/>
        </authorList>
    </citation>
    <scope>PHOSPHORYLATION [LARGE SCALE ANALYSIS] AT SER-360 (ISOFORM 1)</scope>
    <scope>IDENTIFICATION BY MASS SPECTROMETRY [LARGE SCALE ANALYSIS]</scope>
    <source>
        <tissue>Cervix carcinoma</tissue>
    </source>
</reference>
<reference key="11">
    <citation type="journal article" date="2010" name="J. Proteome Res.">
        <title>Characterization of hNek6 interactome reveals an important role for its short N-terminal domain and colocalization with proteins at the centrosome.</title>
        <authorList>
            <person name="Vaz Meirelles G."/>
            <person name="Ferreira Lanza D.C."/>
            <person name="da Silva J.C."/>
            <person name="Santana Bernachi J."/>
            <person name="Paes Leme A.F."/>
            <person name="Kobarg J."/>
        </authorList>
    </citation>
    <scope>SUBCELLULAR LOCATION</scope>
</reference>
<reference key="12">
    <citation type="journal article" date="2012" name="PLoS ONE">
        <title>Novel fusion of MYST/Esa1-associated factor 6 and PHF1 in endometrial stromal sarcoma.</title>
        <authorList>
            <person name="Panagopoulos I."/>
            <person name="Micci F."/>
            <person name="Thorsen J."/>
            <person name="Gorunova L."/>
            <person name="Eibak A.M."/>
            <person name="Bjerkehagen B."/>
            <person name="Davidson B."/>
            <person name="Heim S."/>
        </authorList>
    </citation>
    <scope>DISEASE</scope>
    <scope>CHROMOSOMAL TRANSLOCATION WITH MEAF6</scope>
</reference>
<reference key="13">
    <citation type="journal article" date="2013" name="Biochem. Biophys. Res. Commun.">
        <title>Tudor domains of the PRC2 components PHF1 and PHF19 selectively bind to histone H3K36me3.</title>
        <authorList>
            <person name="Qin S."/>
            <person name="Guo Y."/>
            <person name="Xu C."/>
            <person name="Bian C."/>
            <person name="Fu M."/>
            <person name="Gong S."/>
            <person name="Min J."/>
        </authorList>
    </citation>
    <scope>H3K36ME3-BINDING</scope>
</reference>
<reference key="14">
    <citation type="journal article" date="2013" name="J. Biol. Chem.">
        <title>Polycomb group protein PHF1 regulates p53-dependent cell growth arrest and apoptosis.</title>
        <authorList>
            <person name="Yang Y."/>
            <person name="Wang C."/>
            <person name="Zhang P."/>
            <person name="Gao K."/>
            <person name="Wang D."/>
            <person name="Yu H."/>
            <person name="Zhang T."/>
            <person name="Jiang S."/>
            <person name="Hexige S."/>
            <person name="Hong Z."/>
            <person name="Yasui A."/>
            <person name="Liu J.O."/>
            <person name="Huang H."/>
            <person name="Yu L."/>
        </authorList>
    </citation>
    <scope>FUNCTION</scope>
    <scope>INTERACTION WITH TP53</scope>
    <scope>SUBCELLULAR LOCATION</scope>
</reference>
<reference key="15">
    <citation type="journal article" date="2013" name="J. Proteome Res.">
        <title>Toward a comprehensive characterization of a human cancer cell phosphoproteome.</title>
        <authorList>
            <person name="Zhou H."/>
            <person name="Di Palma S."/>
            <person name="Preisinger C."/>
            <person name="Peng M."/>
            <person name="Polat A.N."/>
            <person name="Heck A.J."/>
            <person name="Mohammed S."/>
        </authorList>
    </citation>
    <scope>PHOSPHORYLATION [LARGE SCALE ANALYSIS] AT SER-420</scope>
    <scope>IDENTIFICATION BY MASS SPECTROMETRY [LARGE SCALE ANALYSIS]</scope>
    <source>
        <tissue>Erythroleukemia</tissue>
    </source>
</reference>
<reference key="16">
    <citation type="journal article" date="2014" name="J. Proteomics">
        <title>An enzyme assisted RP-RPLC approach for in-depth analysis of human liver phosphoproteome.</title>
        <authorList>
            <person name="Bian Y."/>
            <person name="Song C."/>
            <person name="Cheng K."/>
            <person name="Dong M."/>
            <person name="Wang F."/>
            <person name="Huang J."/>
            <person name="Sun D."/>
            <person name="Wang L."/>
            <person name="Ye M."/>
            <person name="Zou H."/>
        </authorList>
    </citation>
    <scope>IDENTIFICATION BY MASS SPECTROMETRY [LARGE SCALE ANALYSIS]</scope>
    <source>
        <tissue>Liver</tissue>
    </source>
</reference>
<reference key="17">
    <citation type="submission" date="2007-06" db="PDB data bank">
        <title>Solution structure of the Tudor domain of PHD finger protein 1 (PHF1 protein).</title>
        <authorList>
            <consortium name="RIKEN structural genomics initiative (RSGI)"/>
        </authorList>
    </citation>
    <scope>STRUCTURE BY NMR OF 29-85</scope>
</reference>
<reference key="18">
    <citation type="journal article" date="2013" name="Mol. Cell">
        <title>An H3K36 methylation-engaging Tudor motif of Polycomb-like proteins mediates PRC2 complex targeting.</title>
        <authorList>
            <person name="Cai L."/>
            <person name="Rothbart S.B."/>
            <person name="Lu R."/>
            <person name="Xu B."/>
            <person name="Chen W.Y."/>
            <person name="Tripathy A."/>
            <person name="Rockowitz S."/>
            <person name="Zheng D."/>
            <person name="Patel D.J."/>
            <person name="Allis C.D."/>
            <person name="Strahl B.D."/>
            <person name="Song J."/>
            <person name="Wang G.G."/>
        </authorList>
    </citation>
    <scope>STRUCTURE BY NMR OF 6-83</scope>
    <scope>FUNCTION</scope>
    <scope>H3K36ME3-BINDING</scope>
    <scope>SUBCELLULAR LOCATION</scope>
    <scope>MUTAGENESIS OF TRP-41; TYR-47; PHE-65; GLU-66 AND PHE-71</scope>
</reference>
<reference key="19">
    <citation type="journal article" date="2012" name="Nat. Struct. Mol. Biol.">
        <title>Molecular basis for H3K36me3 recognition by the Tudor domain of PHF1.</title>
        <authorList>
            <person name="Musselman C.A."/>
            <person name="Avvakumov N."/>
            <person name="Watanabe R."/>
            <person name="Abraham C.G."/>
            <person name="Lalonde M.E."/>
            <person name="Hong Z."/>
            <person name="Allen C."/>
            <person name="Roy S."/>
            <person name="Nunez J.K."/>
            <person name="Nickoloff J."/>
            <person name="Kulesza C.A."/>
            <person name="Yasui A."/>
            <person name="Cote J."/>
            <person name="Kutateladze T.G."/>
        </authorList>
    </citation>
    <scope>X-RAY CRYSTALLOGRAPHY (1.85 ANGSTROMS) OF 28-85</scope>
    <scope>FUNCTION</scope>
    <scope>H3K36ME3-BINDING</scope>
    <scope>SUBCELLULAR LOCATION</scope>
    <scope>MUTAGENESIS OF TRP-41 AND TYR-47</scope>
</reference>
<organism>
    <name type="scientific">Homo sapiens</name>
    <name type="common">Human</name>
    <dbReference type="NCBI Taxonomy" id="9606"/>
    <lineage>
        <taxon>Eukaryota</taxon>
        <taxon>Metazoa</taxon>
        <taxon>Chordata</taxon>
        <taxon>Craniata</taxon>
        <taxon>Vertebrata</taxon>
        <taxon>Euteleostomi</taxon>
        <taxon>Mammalia</taxon>
        <taxon>Eutheria</taxon>
        <taxon>Euarchontoglires</taxon>
        <taxon>Primates</taxon>
        <taxon>Haplorrhini</taxon>
        <taxon>Catarrhini</taxon>
        <taxon>Hominidae</taxon>
        <taxon>Homo</taxon>
    </lineage>
</organism>
<comment type="function">
    <text evidence="7 8 9 11 12 13">Polycomb group (PcG) that specifically binds histone H3 trimethylated at 'Lys-36' (H3K36me3) and recruits the PRC2 complex. Involved in DNA damage response and is recruited at double-strand breaks (DSBs). Acts by binding to H3K36me3, a mark for transcriptional activation, and recruiting the PRC2 complex: it is however unclear whether recruitment of the PRC2 complex to H3K36me3 leads to enhance or inhibit H3K27me3 methylation mediated by the PRC2 complex. According to some reports, PRC2 recruitment by PHF1 promotes H3K27me3 and subsequent gene silencing by inducing spreading of PRC2 and H3K27me3 into H3K36me3 loci (PubMed:18285464, PubMed:23273982). According to another report, PHF1 recruits the PRC2 complex at double-strand breaks (DSBs) and inhibits the activity of PRC2 (PubMed:23142980). Regulates p53/TP53 stability and prolonges its turnover: may act by specifically binding to a methylated from of p53/TP53.</text>
</comment>
<comment type="subunit">
    <text evidence="1 7 8 12">Interacts with CHMP1 (By similarity). Associated component of the PRC2 complex. Interacts with p53/TP53.</text>
</comment>
<comment type="interaction">
    <interactant intactId="EBI-530034">
        <id>O43189</id>
    </interactant>
    <interactant intactId="EBI-11096309">
        <id>Q9NYB9-2</id>
        <label>ABI2</label>
    </interactant>
    <organismsDiffer>false</organismsDiffer>
    <experiments>3</experiments>
</comment>
<comment type="interaction">
    <interactant intactId="EBI-530034">
        <id>O43189</id>
    </interactant>
    <interactant intactId="EBI-948603">
        <id>Q03989</id>
        <label>ARID5A</label>
    </interactant>
    <organismsDiffer>false</organismsDiffer>
    <experiments>3</experiments>
</comment>
<comment type="interaction">
    <interactant intactId="EBI-530034">
        <id>O43189</id>
    </interactant>
    <interactant intactId="EBI-2875665">
        <id>Q96B67</id>
        <label>ARRDC3</label>
    </interactant>
    <organismsDiffer>false</organismsDiffer>
    <experiments>5</experiments>
</comment>
<comment type="interaction">
    <interactant intactId="EBI-530034">
        <id>O43189</id>
    </interactant>
    <interactant intactId="EBI-310660">
        <id>Q9ULK2</id>
        <label>ATXN7L1</label>
    </interactant>
    <organismsDiffer>false</organismsDiffer>
    <experiments>3</experiments>
</comment>
<comment type="interaction">
    <interactant intactId="EBI-530034">
        <id>O43189</id>
    </interactant>
    <interactant intactId="EBI-8640233">
        <id>Q5T686</id>
        <label>AVPI1</label>
    </interactant>
    <organismsDiffer>false</organismsDiffer>
    <experiments>3</experiments>
</comment>
<comment type="interaction">
    <interactant intactId="EBI-530034">
        <id>O43189</id>
    </interactant>
    <interactant intactId="EBI-711810">
        <id>O14503</id>
        <label>BHLHE40</label>
    </interactant>
    <organismsDiffer>false</organismsDiffer>
    <experiments>3</experiments>
</comment>
<comment type="interaction">
    <interactant intactId="EBI-530034">
        <id>O43189</id>
    </interactant>
    <interactant intactId="EBI-517623">
        <id>Q96CA5</id>
        <label>BIRC7</label>
    </interactant>
    <organismsDiffer>false</organismsDiffer>
    <experiments>4</experiments>
</comment>
<comment type="interaction">
    <interactant intactId="EBI-530034">
        <id>O43189</id>
    </interactant>
    <interactant intactId="EBI-11983447">
        <id>Q8N9W6-4</id>
        <label>BOLL</label>
    </interactant>
    <organismsDiffer>false</organismsDiffer>
    <experiments>3</experiments>
</comment>
<comment type="interaction">
    <interactant intactId="EBI-530034">
        <id>O43189</id>
    </interactant>
    <interactant intactId="EBI-739580">
        <id>Q13137</id>
        <label>CALCOCO2</label>
    </interactant>
    <organismsDiffer>false</organismsDiffer>
    <experiments>3</experiments>
</comment>
<comment type="interaction">
    <interactant intactId="EBI-530034">
        <id>O43189</id>
    </interactant>
    <interactant intactId="EBI-13328871">
        <id>Q9H6J7-2</id>
        <label>CSTPP1</label>
    </interactant>
    <organismsDiffer>false</organismsDiffer>
    <experiments>3</experiments>
</comment>
<comment type="interaction">
    <interactant intactId="EBI-530034">
        <id>O43189</id>
    </interactant>
    <interactant intactId="EBI-11988027">
        <id>Q9NRI5-2</id>
        <label>DISC1</label>
    </interactant>
    <organismsDiffer>false</organismsDiffer>
    <experiments>3</experiments>
</comment>
<comment type="interaction">
    <interactant intactId="EBI-530034">
        <id>O43189</id>
    </interactant>
    <interactant intactId="EBI-23669343">
        <id>Q92782-2</id>
        <label>DPF1</label>
    </interactant>
    <organismsDiffer>false</organismsDiffer>
    <experiments>3</experiments>
</comment>
<comment type="interaction">
    <interactant intactId="EBI-530034">
        <id>O43189</id>
    </interactant>
    <interactant intactId="EBI-2349927">
        <id>Q5JST6</id>
        <label>EFHC2</label>
    </interactant>
    <organismsDiffer>false</organismsDiffer>
    <experiments>3</experiments>
</comment>
<comment type="interaction">
    <interactant intactId="EBI-530034">
        <id>O43189</id>
    </interactant>
    <interactant intactId="EBI-530054">
        <id>Q15910</id>
        <label>EZH2</label>
    </interactant>
    <organismsDiffer>false</organismsDiffer>
    <experiments>9</experiments>
</comment>
<comment type="interaction">
    <interactant intactId="EBI-530034">
        <id>O43189</id>
    </interactant>
    <interactant intactId="EBI-701903">
        <id>Q14192</id>
        <label>FHL2</label>
    </interactant>
    <organismsDiffer>false</organismsDiffer>
    <experiments>3</experiments>
</comment>
<comment type="interaction">
    <interactant intactId="EBI-530034">
        <id>O43189</id>
    </interactant>
    <interactant intactId="EBI-2806743">
        <id>P53539</id>
        <label>FOSB</label>
    </interactant>
    <organismsDiffer>false</organismsDiffer>
    <experiments>3</experiments>
</comment>
<comment type="interaction">
    <interactant intactId="EBI-530034">
        <id>O43189</id>
    </interactant>
    <interactant intactId="EBI-5916454">
        <id>A6NEM1</id>
        <label>GOLGA6L9</label>
    </interactant>
    <organismsDiffer>false</organismsDiffer>
    <experiments>3</experiments>
</comment>
<comment type="interaction">
    <interactant intactId="EBI-530034">
        <id>O43189</id>
    </interactant>
    <interactant intactId="EBI-746309">
        <id>Q92917</id>
        <label>GPKOW</label>
    </interactant>
    <organismsDiffer>false</organismsDiffer>
    <experiments>3</experiments>
</comment>
<comment type="interaction">
    <interactant intactId="EBI-530034">
        <id>O43189</id>
    </interactant>
    <interactant intactId="EBI-11519926">
        <id>Q6PI77</id>
        <label>GPRASP3</label>
    </interactant>
    <organismsDiffer>false</organismsDiffer>
    <experiments>5</experiments>
</comment>
<comment type="interaction">
    <interactant intactId="EBI-530034">
        <id>O43189</id>
    </interactant>
    <interactant intactId="EBI-742664">
        <id>Q9BPX1</id>
        <label>HSD17B14</label>
    </interactant>
    <organismsDiffer>false</organismsDiffer>
    <experiments>8</experiments>
</comment>
<comment type="interaction">
    <interactant intactId="EBI-530034">
        <id>O43189</id>
    </interactant>
    <interactant intactId="EBI-6509505">
        <id>Q0VD86</id>
        <label>INCA1</label>
    </interactant>
    <organismsDiffer>false</organismsDiffer>
    <experiments>3</experiments>
</comment>
<comment type="interaction">
    <interactant intactId="EBI-530034">
        <id>O43189</id>
    </interactant>
    <interactant intactId="EBI-9658404">
        <id>Q5VVH5</id>
        <label>IRAK1BP1</label>
    </interactant>
    <organismsDiffer>false</organismsDiffer>
    <experiments>3</experiments>
</comment>
<comment type="interaction">
    <interactant intactId="EBI-530034">
        <id>O43189</id>
    </interactant>
    <interactant intactId="EBI-739493">
        <id>Q6ZU52</id>
        <label>KIAA0408</label>
    </interactant>
    <organismsDiffer>false</organismsDiffer>
    <experiments>4</experiments>
</comment>
<comment type="interaction">
    <interactant intactId="EBI-530034">
        <id>O43189</id>
    </interactant>
    <interactant intactId="EBI-10171697">
        <id>Q6A162</id>
        <label>KRT40</label>
    </interactant>
    <organismsDiffer>false</organismsDiffer>
    <experiments>3</experiments>
</comment>
<comment type="interaction">
    <interactant intactId="EBI-530034">
        <id>O43189</id>
    </interactant>
    <interactant intactId="EBI-20141748">
        <id>P52954</id>
        <label>LBX1</label>
    </interactant>
    <organismsDiffer>false</organismsDiffer>
    <experiments>3</experiments>
</comment>
<comment type="interaction">
    <interactant intactId="EBI-530034">
        <id>O43189</id>
    </interactant>
    <interactant intactId="EBI-741037">
        <id>Q9BRK4</id>
        <label>LZTS2</label>
    </interactant>
    <organismsDiffer>false</organismsDiffer>
    <experiments>3</experiments>
</comment>
<comment type="interaction">
    <interactant intactId="EBI-530034">
        <id>O43189</id>
    </interactant>
    <interactant intactId="EBI-716006">
        <id>Q9Y5V3</id>
        <label>MAGED1</label>
    </interactant>
    <organismsDiffer>false</organismsDiffer>
    <experiments>3</experiments>
</comment>
<comment type="interaction">
    <interactant intactId="EBI-530034">
        <id>O43189</id>
    </interactant>
    <interactant intactId="EBI-724076">
        <id>Q99750</id>
        <label>MDFI</label>
    </interactant>
    <organismsDiffer>false</organismsDiffer>
    <experiments>3</experiments>
</comment>
<comment type="interaction">
    <interactant intactId="EBI-530034">
        <id>O43189</id>
    </interactant>
    <interactant intactId="EBI-16439278">
        <id>Q6FHY5</id>
        <label>MEOX2</label>
    </interactant>
    <organismsDiffer>false</organismsDiffer>
    <experiments>3</experiments>
</comment>
<comment type="interaction">
    <interactant intactId="EBI-530034">
        <id>O43189</id>
    </interactant>
    <interactant intactId="EBI-9675802">
        <id>Q6PF18</id>
        <label>MORN3</label>
    </interactant>
    <organismsDiffer>false</organismsDiffer>
    <experiments>3</experiments>
</comment>
<comment type="interaction">
    <interactant intactId="EBI-530034">
        <id>O43189</id>
    </interactant>
    <interactant intactId="EBI-8641936">
        <id>Q15742</id>
        <label>NAB2</label>
    </interactant>
    <organismsDiffer>false</organismsDiffer>
    <experiments>7</experiments>
</comment>
<comment type="interaction">
    <interactant intactId="EBI-530034">
        <id>O43189</id>
    </interactant>
    <interactant intactId="EBI-11022007">
        <id>Q9HBE1-4</id>
        <label>PATZ1</label>
    </interactant>
    <organismsDiffer>false</organismsDiffer>
    <experiments>3</experiments>
</comment>
<comment type="interaction">
    <interactant intactId="EBI-530034">
        <id>O43189</id>
    </interactant>
    <interactant intactId="EBI-350517">
        <id>Q9NR12</id>
        <label>PDLIM7</label>
    </interactant>
    <organismsDiffer>false</organismsDiffer>
    <experiments>4</experiments>
</comment>
<comment type="interaction">
    <interactant intactId="EBI-530034">
        <id>O43189</id>
    </interactant>
    <interactant intactId="EBI-357275">
        <id>Q99471</id>
        <label>PFDN5</label>
    </interactant>
    <organismsDiffer>false</organismsDiffer>
    <experiments>3</experiments>
</comment>
<comment type="interaction">
    <interactant intactId="EBI-530034">
        <id>O43189</id>
    </interactant>
    <interactant intactId="EBI-14066006">
        <id>Q4G0R1</id>
        <label>PIBF1</label>
    </interactant>
    <organismsDiffer>false</organismsDiffer>
    <experiments>3</experiments>
</comment>
<comment type="interaction">
    <interactant intactId="EBI-530034">
        <id>O43189</id>
    </interactant>
    <interactant intactId="EBI-12754095">
        <id>P86480</id>
        <label>PRR20D</label>
    </interactant>
    <organismsDiffer>false</organismsDiffer>
    <experiments>5</experiments>
</comment>
<comment type="interaction">
    <interactant intactId="EBI-530034">
        <id>O43189</id>
    </interactant>
    <interactant intactId="EBI-11322432">
        <id>Q8NC74</id>
        <label>RBBP8NL</label>
    </interactant>
    <organismsDiffer>false</organismsDiffer>
    <experiments>3</experiments>
</comment>
<comment type="interaction">
    <interactant intactId="EBI-530034">
        <id>O43189</id>
    </interactant>
    <interactant intactId="EBI-740322">
        <id>Q93062</id>
        <label>RBPMS</label>
    </interactant>
    <organismsDiffer>false</organismsDiffer>
    <experiments>4</experiments>
</comment>
<comment type="interaction">
    <interactant intactId="EBI-530034">
        <id>O43189</id>
    </interactant>
    <interactant intactId="EBI-740343">
        <id>Q93062-3</id>
        <label>RBPMS</label>
    </interactant>
    <organismsDiffer>false</organismsDiffer>
    <experiments>3</experiments>
</comment>
<comment type="interaction">
    <interactant intactId="EBI-530034">
        <id>O43189</id>
    </interactant>
    <interactant intactId="EBI-2872322">
        <id>Q9H0W8</id>
        <label>SMG9</label>
    </interactant>
    <organismsDiffer>false</organismsDiffer>
    <experiments>3</experiments>
</comment>
<comment type="interaction">
    <interactant intactId="EBI-530034">
        <id>O43189</id>
    </interactant>
    <interactant intactId="EBI-741237">
        <id>O60504</id>
        <label>SORBS3</label>
    </interactant>
    <organismsDiffer>false</organismsDiffer>
    <experiments>3</experiments>
</comment>
<comment type="interaction">
    <interactant intactId="EBI-530034">
        <id>O43189</id>
    </interactant>
    <interactant intactId="EBI-11959123">
        <id>Q99932-2</id>
        <label>SPAG8</label>
    </interactant>
    <organismsDiffer>false</organismsDiffer>
    <experiments>3</experiments>
</comment>
<comment type="interaction">
    <interactant intactId="EBI-530034">
        <id>O43189</id>
    </interactant>
    <interactant intactId="EBI-717422">
        <id>Q12800</id>
        <label>TFCP2</label>
    </interactant>
    <organismsDiffer>false</organismsDiffer>
    <experiments>4</experiments>
</comment>
<comment type="interaction">
    <interactant intactId="EBI-530034">
        <id>O43189</id>
    </interactant>
    <interactant intactId="EBI-1105213">
        <id>Q9UBB9</id>
        <label>TFIP11</label>
    </interactant>
    <organismsDiffer>false</organismsDiffer>
    <experiments>3</experiments>
</comment>
<comment type="interaction">
    <interactant intactId="EBI-530034">
        <id>O43189</id>
    </interactant>
    <interactant intactId="EBI-741515">
        <id>Q9NVV9</id>
        <label>THAP1</label>
    </interactant>
    <organismsDiffer>false</organismsDiffer>
    <experiments>4</experiments>
</comment>
<comment type="interaction">
    <interactant intactId="EBI-530034">
        <id>O43189</id>
    </interactant>
    <interactant intactId="EBI-11741437">
        <id>Q08117-2</id>
        <label>TLE5</label>
    </interactant>
    <organismsDiffer>false</organismsDiffer>
    <experiments>3</experiments>
</comment>
<comment type="interaction">
    <interactant intactId="EBI-530034">
        <id>O43189</id>
    </interactant>
    <interactant intactId="EBI-949753">
        <id>Q63HR2</id>
        <label>TNS2</label>
    </interactant>
    <organismsDiffer>false</organismsDiffer>
    <experiments>3</experiments>
</comment>
<comment type="interaction">
    <interactant intactId="EBI-530034">
        <id>O43189</id>
    </interactant>
    <interactant intactId="EBI-12815137">
        <id>Q96NM4-3</id>
        <label>TOX2</label>
    </interactant>
    <organismsDiffer>false</organismsDiffer>
    <experiments>3</experiments>
</comment>
<comment type="interaction">
    <interactant intactId="EBI-530034">
        <id>O43189</id>
    </interactant>
    <interactant intactId="EBI-11952721">
        <id>Q05BL1</id>
        <label>TP53BP2</label>
    </interactant>
    <organismsDiffer>false</organismsDiffer>
    <experiments>3</experiments>
</comment>
<comment type="interaction">
    <interactant intactId="EBI-530034">
        <id>O43189</id>
    </interactant>
    <interactant intactId="EBI-740098">
        <id>P36406</id>
        <label>TRIM23</label>
    </interactant>
    <organismsDiffer>false</organismsDiffer>
    <experiments>4</experiments>
</comment>
<comment type="interaction">
    <interactant intactId="EBI-530034">
        <id>O43189</id>
    </interactant>
    <interactant intactId="EBI-11975223">
        <id>Q70EL1-9</id>
        <label>USP54</label>
    </interactant>
    <organismsDiffer>false</organismsDiffer>
    <experiments>3</experiments>
</comment>
<comment type="interaction">
    <interactant intactId="EBI-530034">
        <id>O43189</id>
    </interactant>
    <interactant intactId="EBI-2107455">
        <id>Q08AM6</id>
        <label>VAC14</label>
    </interactant>
    <organismsDiffer>false</organismsDiffer>
    <experiments>3</experiments>
</comment>
<comment type="interaction">
    <interactant intactId="EBI-530034">
        <id>O43189</id>
    </interactant>
    <interactant intactId="EBI-12017160">
        <id>Q96DT7-3</id>
        <label>ZBTB10</label>
    </interactant>
    <organismsDiffer>false</organismsDiffer>
    <experiments>3</experiments>
</comment>
<comment type="interaction">
    <interactant intactId="EBI-530034">
        <id>O43189</id>
    </interactant>
    <interactant intactId="EBI-711925">
        <id>Q05516</id>
        <label>ZBTB16</label>
    </interactant>
    <organismsDiffer>false</organismsDiffer>
    <experiments>3</experiments>
</comment>
<comment type="interaction">
    <interactant intactId="EBI-530034">
        <id>O43189</id>
    </interactant>
    <interactant intactId="EBI-11962760">
        <id>Q9NZV7</id>
        <label>ZIM2</label>
    </interactant>
    <organismsDiffer>false</organismsDiffer>
    <experiments>3</experiments>
</comment>
<comment type="interaction">
    <interactant intactId="EBI-530034">
        <id>O43189</id>
    </interactant>
    <interactant intactId="EBI-18234077">
        <id>O60304</id>
        <label>ZNF500</label>
    </interactant>
    <organismsDiffer>false</organismsDiffer>
    <experiments>3</experiments>
</comment>
<comment type="interaction">
    <interactant intactId="EBI-530034">
        <id>O43189</id>
    </interactant>
    <interactant intactId="EBI-11035148">
        <id>Q8TF50</id>
        <label>ZNF526</label>
    </interactant>
    <organismsDiffer>false</organismsDiffer>
    <experiments>3</experiments>
</comment>
<comment type="interaction">
    <interactant intactId="EBI-530034">
        <id>O43189</id>
    </interactant>
    <interactant intactId="EBI-4395732">
        <id>P0C7X2</id>
        <label>ZNF688</label>
    </interactant>
    <organismsDiffer>false</organismsDiffer>
    <experiments>3</experiments>
</comment>
<comment type="interaction">
    <interactant intactId="EBI-530034">
        <id>O43189</id>
    </interactant>
    <interactant intactId="EBI-7138235">
        <id>Q9NQZ8</id>
        <label>ZNF71</label>
    </interactant>
    <organismsDiffer>false</organismsDiffer>
    <experiments>3</experiments>
</comment>
<comment type="interaction">
    <interactant intactId="EBI-530034">
        <id>O43189</id>
    </interactant>
    <interactant intactId="EBI-527853">
        <id>Q9UGI0</id>
        <label>ZRANB1</label>
    </interactant>
    <organismsDiffer>false</organismsDiffer>
    <experiments>3</experiments>
</comment>
<comment type="subcellular location">
    <subcellularLocation>
        <location>Nucleus</location>
    </subcellularLocation>
    <subcellularLocation>
        <location>Cytoplasm</location>
        <location>Cytoskeleton</location>
        <location>Microtubule organizing center</location>
        <location>Centrosome</location>
    </subcellularLocation>
    <text>Localizes specifically to the promoters of numerous target genes. Localizes to double-strand breaks (DSBs) sites following DNA damage. Co-localizes with NEK6 in the centrosome.</text>
</comment>
<comment type="alternative products">
    <event type="alternative splicing"/>
    <isoform>
        <id>O43189-1</id>
        <name>2</name>
        <name>PHF2</name>
        <sequence type="displayed"/>
    </isoform>
    <isoform>
        <id>O43189-2</id>
        <name>1</name>
        <name>PHF1</name>
        <sequence type="described" ref="VSP_004694 VSP_004695"/>
    </isoform>
</comment>
<comment type="tissue specificity">
    <text>Highest levels in heart, skeletal muscle, and pancreas, lower levels in brain, placenta, lung, liver and kidney.</text>
</comment>
<comment type="domain">
    <text>The Tudor domain recognizes and binds H3K36me3 (PubMed:23142980, PubMed:23228662, PubMed:23273982).</text>
</comment>
<comment type="disease">
    <text evidence="6 10">A chromosomal aberration involving PHF1 may be a cause of endometrial stromal tumors. Translocation t(6;7)(p21;p22) with JAZF1. Translocation t(1;6)(p34;p21) with MEAF6.</text>
</comment>
<comment type="similarity">
    <text evidence="18">Belongs to the Polycomblike family.</text>
</comment>
<dbReference type="EMBL" id="AF029678">
    <property type="protein sequence ID" value="AAC52062.1"/>
    <property type="molecule type" value="mRNA"/>
</dbReference>
<dbReference type="EMBL" id="AF052205">
    <property type="protein sequence ID" value="AAC13273.1"/>
    <property type="molecule type" value="mRNA"/>
</dbReference>
<dbReference type="EMBL" id="AL662799">
    <property type="status" value="NOT_ANNOTATED_CDS"/>
    <property type="molecule type" value="Genomic_DNA"/>
</dbReference>
<dbReference type="EMBL" id="AL021366">
    <property type="protein sequence ID" value="CAA16158.1"/>
    <property type="molecule type" value="Genomic_DNA"/>
</dbReference>
<dbReference type="EMBL" id="AL021366">
    <property type="protein sequence ID" value="CAA16159.1"/>
    <property type="molecule type" value="Genomic_DNA"/>
</dbReference>
<dbReference type="EMBL" id="AL050332">
    <property type="protein sequence ID" value="CAC38366.1"/>
    <property type="molecule type" value="Genomic_DNA"/>
</dbReference>
<dbReference type="EMBL" id="AL050332">
    <property type="protein sequence ID" value="CAC38367.1"/>
    <property type="molecule type" value="Genomic_DNA"/>
</dbReference>
<dbReference type="EMBL" id="BX088650">
    <property type="status" value="NOT_ANNOTATED_CDS"/>
    <property type="molecule type" value="Genomic_DNA"/>
</dbReference>
<dbReference type="EMBL" id="CH471081">
    <property type="protein sequence ID" value="EAX03729.1"/>
    <property type="molecule type" value="Genomic_DNA"/>
</dbReference>
<dbReference type="EMBL" id="CH471081">
    <property type="protein sequence ID" value="EAX03730.1"/>
    <property type="molecule type" value="Genomic_DNA"/>
</dbReference>
<dbReference type="EMBL" id="BC008834">
    <property type="protein sequence ID" value="AAH08834.1"/>
    <property type="molecule type" value="mRNA"/>
</dbReference>
<dbReference type="CCDS" id="CCDS4777.1">
    <molecule id="O43189-1"/>
</dbReference>
<dbReference type="CCDS" id="CCDS4778.1">
    <molecule id="O43189-2"/>
</dbReference>
<dbReference type="RefSeq" id="NP_002627.2">
    <molecule id="O43189-2"/>
    <property type="nucleotide sequence ID" value="NM_002636.5"/>
</dbReference>
<dbReference type="RefSeq" id="NP_077084.2">
    <molecule id="O43189-1"/>
    <property type="nucleotide sequence ID" value="NM_024165.3"/>
</dbReference>
<dbReference type="RefSeq" id="XP_011512964.1">
    <property type="nucleotide sequence ID" value="XM_011514662.1"/>
</dbReference>
<dbReference type="RefSeq" id="XP_047274835.1">
    <molecule id="O43189-1"/>
    <property type="nucleotide sequence ID" value="XM_047418879.1"/>
</dbReference>
<dbReference type="RefSeq" id="XP_054211594.1">
    <molecule id="O43189-1"/>
    <property type="nucleotide sequence ID" value="XM_054355619.1"/>
</dbReference>
<dbReference type="PDB" id="2E5P">
    <property type="method" value="NMR"/>
    <property type="chains" value="A=29-83"/>
</dbReference>
<dbReference type="PDB" id="2M0O">
    <property type="method" value="NMR"/>
    <property type="chains" value="A=6-83"/>
</dbReference>
<dbReference type="PDB" id="4HCZ">
    <property type="method" value="X-ray"/>
    <property type="resolution" value="1.85 A"/>
    <property type="chains" value="A/B=28-85"/>
</dbReference>
<dbReference type="PDB" id="5XFN">
    <property type="method" value="X-ray"/>
    <property type="resolution" value="1.90 A"/>
    <property type="chains" value="A=25-340"/>
</dbReference>
<dbReference type="PDB" id="5XFO">
    <property type="method" value="X-ray"/>
    <property type="resolution" value="1.90 A"/>
    <property type="chains" value="A=25-340"/>
</dbReference>
<dbReference type="PDB" id="5XFP">
    <property type="method" value="X-ray"/>
    <property type="resolution" value="2.30 A"/>
    <property type="chains" value="A/B/E=25-360"/>
</dbReference>
<dbReference type="PDB" id="6WAT">
    <property type="method" value="X-ray"/>
    <property type="resolution" value="1.80 A"/>
    <property type="chains" value="AA/AC/BA/BC/CA/CC/DA/DC/EA/EC/FA/FC/GA/GC/HA/HC/IA/IC/JA/JC/KA/KC/LA/LC/MA/MC/NA/NC/OA/OC=28-87"/>
</dbReference>
<dbReference type="PDB" id="6WAV">
    <property type="method" value="X-ray"/>
    <property type="resolution" value="1.70 A"/>
    <property type="chains" value="A/B/C/D=28-87"/>
</dbReference>
<dbReference type="PDB" id="7LKY">
    <property type="method" value="X-ray"/>
    <property type="resolution" value="1.85 A"/>
    <property type="chains" value="A/B/C/D/E/F/G/H=28-87"/>
</dbReference>
<dbReference type="PDB" id="8H43">
    <property type="method" value="X-ray"/>
    <property type="resolution" value="2.30 A"/>
    <property type="chains" value="A/B/C=28-87"/>
</dbReference>
<dbReference type="PDBsum" id="2E5P"/>
<dbReference type="PDBsum" id="2M0O"/>
<dbReference type="PDBsum" id="4HCZ"/>
<dbReference type="PDBsum" id="5XFN"/>
<dbReference type="PDBsum" id="5XFO"/>
<dbReference type="PDBsum" id="5XFP"/>
<dbReference type="PDBsum" id="6WAT"/>
<dbReference type="PDBsum" id="6WAV"/>
<dbReference type="PDBsum" id="7LKY"/>
<dbReference type="PDBsum" id="8H43"/>
<dbReference type="BMRB" id="O43189"/>
<dbReference type="SMR" id="O43189"/>
<dbReference type="BioGRID" id="111271">
    <property type="interactions" value="173"/>
</dbReference>
<dbReference type="ComplexPortal" id="CPX-2204">
    <property type="entry name" value="Polycomb repressive complex 2.1, EZH2-RBBP4-PCL1-PALI1 variant"/>
</dbReference>
<dbReference type="ComplexPortal" id="CPX-2205">
    <property type="entry name" value="Polycomb repressive complex 2.1, EZH1-RBBP7-PCL1-EPOP variant"/>
</dbReference>
<dbReference type="ComplexPortal" id="CPX-2307">
    <property type="entry name" value="Polycomb repressive complex 2.1, EZH1-RBBP7-PCL1-PALI1 variant"/>
</dbReference>
<dbReference type="ComplexPortal" id="CPX-2311">
    <property type="entry name" value="Polycomb repressive complex 2.1, EZH2-RBBP7-PCL1-PALI1 variant"/>
</dbReference>
<dbReference type="ComplexPortal" id="CPX-2317">
    <property type="entry name" value="Polycomb repressive complex 2.1, EZH1-RBBP4-PCL1-EPOP variant"/>
</dbReference>
<dbReference type="ComplexPortal" id="CPX-2324">
    <property type="entry name" value="Polycomb repressive complex 2.1, EZH2-RBBP4-PCL1-EPOP variant"/>
</dbReference>
<dbReference type="ComplexPortal" id="CPX-2325">
    <property type="entry name" value="Polycomb repressive complex 2.1, EZH2-RBBP7-PCL1-EPOP variant"/>
</dbReference>
<dbReference type="ComplexPortal" id="CPX-2569">
    <property type="entry name" value="Polycomb repressive complex 2.1, EZH1-RBBP4-PCL1-PALI1 variant"/>
</dbReference>
<dbReference type="DIP" id="DIP-34001N"/>
<dbReference type="FunCoup" id="O43189">
    <property type="interactions" value="2558"/>
</dbReference>
<dbReference type="IntAct" id="O43189">
    <property type="interactions" value="94"/>
</dbReference>
<dbReference type="MINT" id="O43189"/>
<dbReference type="STRING" id="9606.ENSP00000363640"/>
<dbReference type="BindingDB" id="O43189"/>
<dbReference type="GlyCosmos" id="O43189">
    <property type="glycosylation" value="1 site, 2 glycans"/>
</dbReference>
<dbReference type="GlyGen" id="O43189">
    <property type="glycosylation" value="2 sites, 2 O-linked glycans (1 site)"/>
</dbReference>
<dbReference type="iPTMnet" id="O43189"/>
<dbReference type="PhosphoSitePlus" id="O43189"/>
<dbReference type="BioMuta" id="PHF1"/>
<dbReference type="jPOST" id="O43189"/>
<dbReference type="MassIVE" id="O43189"/>
<dbReference type="PaxDb" id="9606-ENSP00000363640"/>
<dbReference type="PeptideAtlas" id="O43189"/>
<dbReference type="ProteomicsDB" id="48805">
    <molecule id="O43189-1"/>
</dbReference>
<dbReference type="ProteomicsDB" id="48806">
    <molecule id="O43189-2"/>
</dbReference>
<dbReference type="Pumba" id="O43189"/>
<dbReference type="Antibodypedia" id="14271">
    <property type="antibodies" value="258 antibodies from 29 providers"/>
</dbReference>
<dbReference type="DNASU" id="5252"/>
<dbReference type="Ensembl" id="ENST00000374512.7">
    <molecule id="O43189-2"/>
    <property type="protein sequence ID" value="ENSP00000363636.3"/>
    <property type="gene ID" value="ENSG00000112511.18"/>
</dbReference>
<dbReference type="Ensembl" id="ENST00000374516.8">
    <molecule id="O43189-1"/>
    <property type="protein sequence ID" value="ENSP00000363640.3"/>
    <property type="gene ID" value="ENSG00000112511.18"/>
</dbReference>
<dbReference type="Ensembl" id="ENST00000427869.6">
    <property type="protein sequence ID" value="ENSP00000391901.2"/>
    <property type="gene ID" value="ENSG00000225553.7"/>
</dbReference>
<dbReference type="Ensembl" id="ENST00000454914.6">
    <property type="protein sequence ID" value="ENSP00000407295.2"/>
    <property type="gene ID" value="ENSG00000225553.7"/>
</dbReference>
<dbReference type="GeneID" id="5252"/>
<dbReference type="KEGG" id="hsa:5252"/>
<dbReference type="MANE-Select" id="ENST00000374516.8">
    <property type="protein sequence ID" value="ENSP00000363640.3"/>
    <property type="RefSeq nucleotide sequence ID" value="NM_024165.3"/>
    <property type="RefSeq protein sequence ID" value="NP_077084.2"/>
</dbReference>
<dbReference type="UCSC" id="uc003oeh.4">
    <molecule id="O43189-1"/>
    <property type="organism name" value="human"/>
</dbReference>
<dbReference type="AGR" id="HGNC:8919"/>
<dbReference type="CTD" id="5252"/>
<dbReference type="DisGeNET" id="5252"/>
<dbReference type="GeneCards" id="PHF1"/>
<dbReference type="HGNC" id="HGNC:8919">
    <property type="gene designation" value="PHF1"/>
</dbReference>
<dbReference type="HPA" id="ENSG00000112511">
    <property type="expression patterns" value="Low tissue specificity"/>
</dbReference>
<dbReference type="MalaCards" id="PHF1"/>
<dbReference type="MIM" id="602881">
    <property type="type" value="gene"/>
</dbReference>
<dbReference type="neXtProt" id="NX_O43189"/>
<dbReference type="OpenTargets" id="ENSG00000112511"/>
<dbReference type="PharmGKB" id="PA33259"/>
<dbReference type="VEuPathDB" id="HostDB:ENSG00000112511"/>
<dbReference type="eggNOG" id="KOG4323">
    <property type="taxonomic scope" value="Eukaryota"/>
</dbReference>
<dbReference type="GeneTree" id="ENSGT00950000183180"/>
<dbReference type="HOGENOM" id="CLU_032773_2_0_1"/>
<dbReference type="InParanoid" id="O43189"/>
<dbReference type="OMA" id="CAGPGWN"/>
<dbReference type="OrthoDB" id="10033786at2759"/>
<dbReference type="PAN-GO" id="O43189">
    <property type="GO annotations" value="6 GO annotations based on evolutionary models"/>
</dbReference>
<dbReference type="PhylomeDB" id="O43189"/>
<dbReference type="TreeFam" id="TF106420"/>
<dbReference type="PathwayCommons" id="O43189"/>
<dbReference type="Reactome" id="R-HSA-212300">
    <property type="pathway name" value="PRC2 methylates histones and DNA"/>
</dbReference>
<dbReference type="SignaLink" id="O43189"/>
<dbReference type="SIGNOR" id="O43189"/>
<dbReference type="BioGRID-ORCS" id="5252">
    <property type="hits" value="17 hits in 1159 CRISPR screens"/>
</dbReference>
<dbReference type="ChiTaRS" id="PHF1">
    <property type="organism name" value="human"/>
</dbReference>
<dbReference type="EvolutionaryTrace" id="O43189"/>
<dbReference type="GeneWiki" id="PHF1"/>
<dbReference type="GenomeRNAi" id="5252"/>
<dbReference type="Pharos" id="O43189">
    <property type="development level" value="Tbio"/>
</dbReference>
<dbReference type="PRO" id="PR:O43189"/>
<dbReference type="Proteomes" id="UP000005640">
    <property type="component" value="Chromosome 6"/>
</dbReference>
<dbReference type="RNAct" id="O43189">
    <property type="molecule type" value="protein"/>
</dbReference>
<dbReference type="Bgee" id="ENSG00000112511">
    <property type="expression patterns" value="Expressed in left testis and 97 other cell types or tissues"/>
</dbReference>
<dbReference type="ExpressionAtlas" id="O43189">
    <property type="expression patterns" value="baseline and differential"/>
</dbReference>
<dbReference type="GO" id="GO:0005813">
    <property type="term" value="C:centrosome"/>
    <property type="evidence" value="ECO:0007669"/>
    <property type="project" value="UniProtKB-SubCell"/>
</dbReference>
<dbReference type="GO" id="GO:0005829">
    <property type="term" value="C:cytosol"/>
    <property type="evidence" value="ECO:0000314"/>
    <property type="project" value="HPA"/>
</dbReference>
<dbReference type="GO" id="GO:0035098">
    <property type="term" value="C:ESC/E(Z) complex"/>
    <property type="evidence" value="ECO:0000314"/>
    <property type="project" value="UniProtKB"/>
</dbReference>
<dbReference type="GO" id="GO:0005654">
    <property type="term" value="C:nucleoplasm"/>
    <property type="evidence" value="ECO:0000314"/>
    <property type="project" value="HPA"/>
</dbReference>
<dbReference type="GO" id="GO:0005634">
    <property type="term" value="C:nucleus"/>
    <property type="evidence" value="ECO:0000314"/>
    <property type="project" value="UniProtKB"/>
</dbReference>
<dbReference type="GO" id="GO:0035861">
    <property type="term" value="C:site of double-strand break"/>
    <property type="evidence" value="ECO:0000314"/>
    <property type="project" value="UniProtKB"/>
</dbReference>
<dbReference type="GO" id="GO:0003682">
    <property type="term" value="F:chromatin binding"/>
    <property type="evidence" value="ECO:0000318"/>
    <property type="project" value="GO_Central"/>
</dbReference>
<dbReference type="GO" id="GO:0003677">
    <property type="term" value="F:DNA binding"/>
    <property type="evidence" value="ECO:0000318"/>
    <property type="project" value="GO_Central"/>
</dbReference>
<dbReference type="GO" id="GO:0140003">
    <property type="term" value="F:histone H3K36me3 reader activity"/>
    <property type="evidence" value="ECO:0000314"/>
    <property type="project" value="UniProtKB"/>
</dbReference>
<dbReference type="GO" id="GO:0140002">
    <property type="term" value="F:histone H3K4me3 reader activity"/>
    <property type="evidence" value="ECO:0000314"/>
    <property type="project" value="GO_Central"/>
</dbReference>
<dbReference type="GO" id="GO:1990226">
    <property type="term" value="F:histone methyltransferase binding"/>
    <property type="evidence" value="ECO:0000353"/>
    <property type="project" value="ARUK-UCL"/>
</dbReference>
<dbReference type="GO" id="GO:0042802">
    <property type="term" value="F:identical protein binding"/>
    <property type="evidence" value="ECO:0000353"/>
    <property type="project" value="ARUK-UCL"/>
</dbReference>
<dbReference type="GO" id="GO:0035064">
    <property type="term" value="F:methylated histone binding"/>
    <property type="evidence" value="ECO:0000318"/>
    <property type="project" value="GO_Central"/>
</dbReference>
<dbReference type="GO" id="GO:0001222">
    <property type="term" value="F:transcription corepressor binding"/>
    <property type="evidence" value="ECO:0000353"/>
    <property type="project" value="ARUK-UCL"/>
</dbReference>
<dbReference type="GO" id="GO:0008270">
    <property type="term" value="F:zinc ion binding"/>
    <property type="evidence" value="ECO:0007669"/>
    <property type="project" value="UniProtKB-KW"/>
</dbReference>
<dbReference type="GO" id="GO:0140861">
    <property type="term" value="P:DNA repair-dependent chromatin remodeling"/>
    <property type="evidence" value="ECO:0000314"/>
    <property type="project" value="UniProtKB"/>
</dbReference>
<dbReference type="GO" id="GO:0045814">
    <property type="term" value="P:negative regulation of gene expression, epigenetic"/>
    <property type="evidence" value="ECO:0000318"/>
    <property type="project" value="GO_Central"/>
</dbReference>
<dbReference type="CDD" id="cd15500">
    <property type="entry name" value="PHD1_PHF1"/>
    <property type="match status" value="1"/>
</dbReference>
<dbReference type="CDD" id="cd15582">
    <property type="entry name" value="PHD2_PHF1"/>
    <property type="match status" value="1"/>
</dbReference>
<dbReference type="CDD" id="cd20449">
    <property type="entry name" value="Tudor_PHF1"/>
    <property type="match status" value="1"/>
</dbReference>
<dbReference type="FunFam" id="2.30.30.140:FF:000040">
    <property type="entry name" value="PHD finger protein 1 isoform X1"/>
    <property type="match status" value="1"/>
</dbReference>
<dbReference type="FunFam" id="3.30.40.10:FF:000125">
    <property type="entry name" value="Putative PHD finger protein 1"/>
    <property type="match status" value="1"/>
</dbReference>
<dbReference type="FunFam" id="3.90.980.20:FF:000003">
    <property type="entry name" value="Putative PHD finger protein 1"/>
    <property type="match status" value="1"/>
</dbReference>
<dbReference type="Gene3D" id="2.30.30.140">
    <property type="match status" value="1"/>
</dbReference>
<dbReference type="Gene3D" id="3.90.980.20">
    <property type="match status" value="1"/>
</dbReference>
<dbReference type="Gene3D" id="3.30.40.10">
    <property type="entry name" value="Zinc/RING finger domain, C3HC4 (zinc finger)"/>
    <property type="match status" value="1"/>
</dbReference>
<dbReference type="IDEAL" id="IID00432"/>
<dbReference type="InterPro" id="IPR040477">
    <property type="entry name" value="KDM4-like_Tudor"/>
</dbReference>
<dbReference type="InterPro" id="IPR025894">
    <property type="entry name" value="Mtf2_C_dom"/>
</dbReference>
<dbReference type="InterPro" id="IPR031202">
    <property type="entry name" value="PHF1_PDH-finger1"/>
</dbReference>
<dbReference type="InterPro" id="IPR047010">
    <property type="entry name" value="PHF1_PHD-finger2"/>
</dbReference>
<dbReference type="InterPro" id="IPR002999">
    <property type="entry name" value="Tudor"/>
</dbReference>
<dbReference type="InterPro" id="IPR047399">
    <property type="entry name" value="Tudor_PHF1"/>
</dbReference>
<dbReference type="InterPro" id="IPR019786">
    <property type="entry name" value="Zinc_finger_PHD-type_CS"/>
</dbReference>
<dbReference type="InterPro" id="IPR011011">
    <property type="entry name" value="Znf_FYVE_PHD"/>
</dbReference>
<dbReference type="InterPro" id="IPR001965">
    <property type="entry name" value="Znf_PHD"/>
</dbReference>
<dbReference type="InterPro" id="IPR019787">
    <property type="entry name" value="Znf_PHD-finger"/>
</dbReference>
<dbReference type="InterPro" id="IPR013083">
    <property type="entry name" value="Znf_RING/FYVE/PHD"/>
</dbReference>
<dbReference type="PANTHER" id="PTHR12628:SF11">
    <property type="entry name" value="PHD FINGER PROTEIN 1"/>
    <property type="match status" value="1"/>
</dbReference>
<dbReference type="PANTHER" id="PTHR12628">
    <property type="entry name" value="POLYCOMB-LIKE TRANSCRIPTION FACTOR"/>
    <property type="match status" value="1"/>
</dbReference>
<dbReference type="Pfam" id="PF14061">
    <property type="entry name" value="Mtf2_C"/>
    <property type="match status" value="1"/>
</dbReference>
<dbReference type="Pfam" id="PF00628">
    <property type="entry name" value="PHD"/>
    <property type="match status" value="1"/>
</dbReference>
<dbReference type="Pfam" id="PF18104">
    <property type="entry name" value="Tudor_2"/>
    <property type="match status" value="1"/>
</dbReference>
<dbReference type="SMART" id="SM00249">
    <property type="entry name" value="PHD"/>
    <property type="match status" value="2"/>
</dbReference>
<dbReference type="SMART" id="SM00333">
    <property type="entry name" value="TUDOR"/>
    <property type="match status" value="1"/>
</dbReference>
<dbReference type="SUPFAM" id="SSF57903">
    <property type="entry name" value="FYVE/PHD zinc finger"/>
    <property type="match status" value="2"/>
</dbReference>
<dbReference type="SUPFAM" id="SSF63748">
    <property type="entry name" value="Tudor/PWWP/MBT"/>
    <property type="match status" value="1"/>
</dbReference>
<dbReference type="PROSITE" id="PS01359">
    <property type="entry name" value="ZF_PHD_1"/>
    <property type="match status" value="2"/>
</dbReference>
<dbReference type="PROSITE" id="PS50016">
    <property type="entry name" value="ZF_PHD_2"/>
    <property type="match status" value="1"/>
</dbReference>
<proteinExistence type="evidence at protein level"/>
<gene>
    <name type="primary">PHF1</name>
    <name type="synonym">PCL1</name>
</gene>
<name>PHF1_HUMAN</name>
<protein>
    <recommendedName>
        <fullName>PHD finger protein 1</fullName>
        <shortName>Protein PHF1</shortName>
        <shortName>hPHF1</shortName>
    </recommendedName>
    <alternativeName>
        <fullName>Polycomb-like protein 1</fullName>
        <shortName>hPCl1</shortName>
    </alternativeName>
</protein>
<feature type="chain" id="PRO_0000059288" description="PHD finger protein 1">
    <location>
        <begin position="1"/>
        <end position="567"/>
    </location>
</feature>
<feature type="domain" description="Tudor">
    <location>
        <begin position="29"/>
        <end position="86"/>
    </location>
</feature>
<feature type="zinc finger region" description="PHD-type 1" evidence="2">
    <location>
        <begin position="87"/>
        <end position="142"/>
    </location>
</feature>
<feature type="zinc finger region" description="PHD-type 2" evidence="2">
    <location>
        <begin position="186"/>
        <end position="240"/>
    </location>
</feature>
<feature type="region of interest" description="Disordered" evidence="3">
    <location>
        <begin position="1"/>
        <end position="31"/>
    </location>
</feature>
<feature type="region of interest" description="Disordered" evidence="3">
    <location>
        <begin position="333"/>
        <end position="441"/>
    </location>
</feature>
<feature type="region of interest" description="Disordered" evidence="3">
    <location>
        <begin position="455"/>
        <end position="537"/>
    </location>
</feature>
<feature type="compositionally biased region" description="Basic and acidic residues" evidence="3">
    <location>
        <begin position="371"/>
        <end position="386"/>
    </location>
</feature>
<feature type="compositionally biased region" description="Low complexity" evidence="3">
    <location>
        <begin position="423"/>
        <end position="433"/>
    </location>
</feature>
<feature type="compositionally biased region" description="Low complexity" evidence="3">
    <location>
        <begin position="456"/>
        <end position="470"/>
    </location>
</feature>
<feature type="compositionally biased region" description="Low complexity" evidence="3">
    <location>
        <begin position="488"/>
        <end position="510"/>
    </location>
</feature>
<feature type="compositionally biased region" description="Gly residues" evidence="3">
    <location>
        <begin position="524"/>
        <end position="534"/>
    </location>
</feature>
<feature type="modified residue" description="Phosphoserine" evidence="20">
    <location>
        <position position="420"/>
    </location>
</feature>
<feature type="splice variant" id="VSP_004694" description="In isoform 1." evidence="17">
    <original>SFPSGQGPGGGVSRPLGKRRRPEPEPLRRRQKGKVEELGPPSAVRNQPEPQEQRERAHLQRALQASVSPPSPSPNQSYQGSSGYNFRPTDARCLPSSPIRMFASFHPS</original>
    <variation>RAGPWGRGLTSPGEAPEAGARAPEEEAEGESGGAGATLSSAQSARAPGAEGAGSSAEGTAAAPSGCLLPSTLLPAPQGPLGTVDPQTGHPWNFTLVSPQTSLKVPPTR</variation>
    <location>
        <begin position="350"/>
        <end position="457"/>
    </location>
</feature>
<feature type="splice variant" id="VSP_004695" description="In isoform 1." evidence="17">
    <location>
        <begin position="458"/>
        <end position="567"/>
    </location>
</feature>
<feature type="sequence variant" id="VAR_044500" description="In dbSNP:rs6934613.">
    <original>T</original>
    <variation>S</variation>
    <location>
        <position position="42"/>
    </location>
</feature>
<feature type="sequence variant" id="VAR_034382" description="In dbSNP:rs3116713." evidence="4 5 14 15 16">
    <original>R</original>
    <variation>K</variation>
    <location>
        <position position="304"/>
    </location>
</feature>
<feature type="mutagenesis site" description="Abolishes histone H3K36me3-binding and localization at double-strand breaks (DSBs)." evidence="11 13">
    <original>W</original>
    <variation>A</variation>
    <location>
        <position position="41"/>
    </location>
</feature>
<feature type="mutagenesis site" description="Abolishes histone H3K36me3-binding." evidence="11 13">
    <original>Y</original>
    <variation>A</variation>
    <location>
        <position position="47"/>
    </location>
</feature>
<feature type="mutagenesis site" description="Abolishes histone H3K36me3-binding." evidence="13">
    <original>F</original>
    <variation>A</variation>
    <location>
        <position position="65"/>
    </location>
</feature>
<feature type="mutagenesis site" description="Impairs histone H3K36me3-binding." evidence="13">
    <original>E</original>
    <variation>K</variation>
    <location>
        <position position="66"/>
    </location>
</feature>
<feature type="mutagenesis site" description="Abolishes histone H3K36me3-binding." evidence="13">
    <original>F</original>
    <variation>A</variation>
    <location>
        <position position="71"/>
    </location>
</feature>
<feature type="strand" evidence="24">
    <location>
        <begin position="36"/>
        <end position="40"/>
    </location>
</feature>
<feature type="strand" evidence="24">
    <location>
        <begin position="46"/>
        <end position="55"/>
    </location>
</feature>
<feature type="turn" evidence="24">
    <location>
        <begin position="56"/>
        <end position="59"/>
    </location>
</feature>
<feature type="strand" evidence="24">
    <location>
        <begin position="60"/>
        <end position="65"/>
    </location>
</feature>
<feature type="turn" evidence="21">
    <location>
        <begin position="66"/>
        <end position="68"/>
    </location>
</feature>
<feature type="strand" evidence="24">
    <location>
        <begin position="70"/>
        <end position="74"/>
    </location>
</feature>
<feature type="helix" evidence="24">
    <location>
        <begin position="75"/>
        <end position="77"/>
    </location>
</feature>
<feature type="strand" evidence="24">
    <location>
        <begin position="78"/>
        <end position="82"/>
    </location>
</feature>
<feature type="strand" evidence="23">
    <location>
        <begin position="87"/>
        <end position="90"/>
    </location>
</feature>
<feature type="turn" evidence="22">
    <location>
        <begin position="91"/>
        <end position="93"/>
    </location>
</feature>
<feature type="strand" evidence="22">
    <location>
        <begin position="104"/>
        <end position="106"/>
    </location>
</feature>
<feature type="turn" evidence="22">
    <location>
        <begin position="108"/>
        <end position="110"/>
    </location>
</feature>
<feature type="strand" evidence="22">
    <location>
        <begin position="113"/>
        <end position="115"/>
    </location>
</feature>
<feature type="helix" evidence="22">
    <location>
        <begin position="116"/>
        <end position="118"/>
    </location>
</feature>
<feature type="strand" evidence="22">
    <location>
        <begin position="119"/>
        <end position="121"/>
    </location>
</feature>
<feature type="strand" evidence="23">
    <location>
        <begin position="129"/>
        <end position="133"/>
    </location>
</feature>
<feature type="helix" evidence="22">
    <location>
        <begin position="137"/>
        <end position="144"/>
    </location>
</feature>
<feature type="helix" evidence="22">
    <location>
        <begin position="155"/>
        <end position="163"/>
    </location>
</feature>
<feature type="helix" evidence="23">
    <location>
        <begin position="171"/>
        <end position="173"/>
    </location>
</feature>
<feature type="turn" evidence="22">
    <location>
        <begin position="189"/>
        <end position="191"/>
    </location>
</feature>
<feature type="turn" evidence="22">
    <location>
        <begin position="197"/>
        <end position="200"/>
    </location>
</feature>
<feature type="strand" evidence="22">
    <location>
        <begin position="201"/>
        <end position="203"/>
    </location>
</feature>
<feature type="turn" evidence="22">
    <location>
        <begin position="205"/>
        <end position="207"/>
    </location>
</feature>
<feature type="strand" evidence="22">
    <location>
        <begin position="210"/>
        <end position="212"/>
    </location>
</feature>
<feature type="helix" evidence="22">
    <location>
        <begin position="213"/>
        <end position="215"/>
    </location>
</feature>
<feature type="strand" evidence="22">
    <location>
        <begin position="230"/>
        <end position="233"/>
    </location>
</feature>
<feature type="helix" evidence="22">
    <location>
        <begin position="235"/>
        <end position="238"/>
    </location>
</feature>
<feature type="strand" evidence="22">
    <location>
        <begin position="243"/>
        <end position="246"/>
    </location>
</feature>
<feature type="helix" evidence="22">
    <location>
        <begin position="251"/>
        <end position="266"/>
    </location>
</feature>
<feature type="turn" evidence="22">
    <location>
        <begin position="273"/>
        <end position="276"/>
    </location>
</feature>
<feature type="helix" evidence="22">
    <location>
        <begin position="277"/>
        <end position="283"/>
    </location>
</feature>
<feature type="helix" evidence="22">
    <location>
        <begin position="285"/>
        <end position="288"/>
    </location>
</feature>
<feature type="helix" evidence="22">
    <location>
        <begin position="291"/>
        <end position="295"/>
    </location>
</feature>
<feature type="turn" evidence="22">
    <location>
        <begin position="298"/>
        <end position="300"/>
    </location>
</feature>
<feature type="helix" evidence="22">
    <location>
        <begin position="301"/>
        <end position="311"/>
    </location>
</feature>
<feature type="turn" evidence="22">
    <location>
        <begin position="313"/>
        <end position="315"/>
    </location>
</feature>
<feature type="strand" evidence="22">
    <location>
        <begin position="316"/>
        <end position="318"/>
    </location>
</feature>
<feature type="helix" evidence="23">
    <location>
        <begin position="322"/>
        <end position="324"/>
    </location>
</feature>
<feature type="strand" evidence="22">
    <location>
        <begin position="328"/>
        <end position="332"/>
    </location>
</feature>
<feature type="modified residue" description="Phosphoserine" evidence="19">
    <location sequence="O43189-2">
        <position position="360"/>
    </location>
</feature>
<evidence type="ECO:0000250" key="1"/>
<evidence type="ECO:0000255" key="2">
    <source>
        <dbReference type="PROSITE-ProRule" id="PRU00146"/>
    </source>
</evidence>
<evidence type="ECO:0000256" key="3">
    <source>
        <dbReference type="SAM" id="MobiDB-lite"/>
    </source>
</evidence>
<evidence type="ECO:0000269" key="4">
    <source>
    </source>
</evidence>
<evidence type="ECO:0000269" key="5">
    <source>
    </source>
</evidence>
<evidence type="ECO:0000269" key="6">
    <source>
    </source>
</evidence>
<evidence type="ECO:0000269" key="7">
    <source>
    </source>
</evidence>
<evidence type="ECO:0000269" key="8">
    <source>
    </source>
</evidence>
<evidence type="ECO:0000269" key="9">
    <source>
    </source>
</evidence>
<evidence type="ECO:0000269" key="10">
    <source>
    </source>
</evidence>
<evidence type="ECO:0000269" key="11">
    <source>
    </source>
</evidence>
<evidence type="ECO:0000269" key="12">
    <source>
    </source>
</evidence>
<evidence type="ECO:0000269" key="13">
    <source>
    </source>
</evidence>
<evidence type="ECO:0000269" key="14">
    <source>
    </source>
</evidence>
<evidence type="ECO:0000269" key="15">
    <source ref="2"/>
</evidence>
<evidence type="ECO:0000269" key="16">
    <source ref="4"/>
</evidence>
<evidence type="ECO:0000303" key="17">
    <source>
    </source>
</evidence>
<evidence type="ECO:0000305" key="18"/>
<evidence type="ECO:0007744" key="19">
    <source>
    </source>
</evidence>
<evidence type="ECO:0007744" key="20">
    <source>
    </source>
</evidence>
<evidence type="ECO:0007829" key="21">
    <source>
        <dbReference type="PDB" id="2E5P"/>
    </source>
</evidence>
<evidence type="ECO:0007829" key="22">
    <source>
        <dbReference type="PDB" id="5XFN"/>
    </source>
</evidence>
<evidence type="ECO:0007829" key="23">
    <source>
        <dbReference type="PDB" id="5XFO"/>
    </source>
</evidence>
<evidence type="ECO:0007829" key="24">
    <source>
        <dbReference type="PDB" id="6WAV"/>
    </source>
</evidence>
<sequence length="567" mass="62106">MAQPPRLSRSGASSLWDPASPAPTSGPRPRLWEGQDVLARWTDGLLYLGTIKKVDSAREVCLVQFEDDSQFLVLWKDISPAALPGEELLCCVCRSETVVPGNRLVSCEKCRHAYHQDCHVPRAPAPGEGEGTSWVCRQCVFAIATKRGGALKKGPYARAMLGMKLSLPYGLKGLDWDAGHLSNRQQSYCYCGGPGEWNLKMLQCRSCLQWFHEACTQCLSKPLLYGDRFYEFECCVCRGGPEKVRRLQLRWVDVAHLVLYHLSVCCKKKYFDFDREILPFTSENWDSLLLGELSDTPKGERSSRLLSALNSHKDRFISGREIKKRKCLFGLHARMPPPVEPPTGDGALTSFPSGQGPGGGVSRPLGKRRRPEPEPLRRRQKGKVEELGPPSAVRNQPEPQEQRERAHLQRALQASVSPPSPSPNQSYQGSSGYNFRPTDARCLPSSPIRMFASFHPSASTAGTSGDSGPPDRSPLELHIGFPTDIPKSAPHSMTASSSSVSSPSPGLPRRSAPPSPLCRSLSPGTGGGVRGGVGYLSRGDPVRVLARRVRPDGSVQYLVEWGGGGIF</sequence>
<accession>O43189</accession>
<accession>B1AZX2</accession>
<accession>B1AZX3</accession>
<accession>O60929</accession>
<accession>Q5SU07</accession>
<accession>Q5SU08</accession>
<accession>Q96KM7</accession>